<keyword id="KW-0378">Hydrolase</keyword>
<keyword id="KW-0441">Lipid A biosynthesis</keyword>
<keyword id="KW-0444">Lipid biosynthesis</keyword>
<keyword id="KW-0443">Lipid metabolism</keyword>
<keyword id="KW-0479">Metal-binding</keyword>
<keyword id="KW-1185">Reference proteome</keyword>
<keyword id="KW-0862">Zinc</keyword>
<protein>
    <recommendedName>
        <fullName evidence="1">UDP-3-O-acyl-N-acetylglucosamine deacetylase</fullName>
        <shortName evidence="1">UDP-3-O-acyl-GlcNAc deacetylase</shortName>
        <ecNumber evidence="1">3.5.1.108</ecNumber>
    </recommendedName>
    <alternativeName>
        <fullName evidence="1">UDP-3-O-[R-3-hydroxymyristoyl]-N-acetylglucosamine deacetylase</fullName>
    </alternativeName>
</protein>
<reference key="1">
    <citation type="journal article" date="2007" name="Proc. Natl. Acad. Sci. U.S.A.">
        <title>Deep-sea vent epsilon-proteobacterial genomes provide insights into emergence of pathogens.</title>
        <authorList>
            <person name="Nakagawa S."/>
            <person name="Takaki Y."/>
            <person name="Shimamura S."/>
            <person name="Reysenbach A.-L."/>
            <person name="Takai K."/>
            <person name="Horikoshi K."/>
        </authorList>
    </citation>
    <scope>NUCLEOTIDE SEQUENCE [LARGE SCALE GENOMIC DNA]</scope>
    <source>
        <strain>SB155-2</strain>
    </source>
</reference>
<accession>A6Q223</accession>
<sequence>MRQRTIERSVEVVGIGLHKGVPVTMRLEPLEENSGILFYRKDKNRYIELKPQNVVDTKMATVIGKDGVVISTIEHLMSAVYGYGIDNLLIILDNDEVPIMDGSAISYCMLLDEAGIMEQKSTKKVLRIKNEVEVRDGDKYVRLKPADTLSFDFTIHFDHPVIGKEHYHFEFSKKNFLEEIARARTFGFLHEVQYLRSIGLAQGGSLDNAIVLDEKKILNPDGLRFEDEFVRHKILDAIGDLSLLGMPVMGLYESFAGSHHLNHLLTVKLLEECSNYEIVEASTTTQEGYVIGAACAKE</sequence>
<evidence type="ECO:0000255" key="1">
    <source>
        <dbReference type="HAMAP-Rule" id="MF_00388"/>
    </source>
</evidence>
<organism>
    <name type="scientific">Nitratiruptor sp. (strain SB155-2)</name>
    <dbReference type="NCBI Taxonomy" id="387092"/>
    <lineage>
        <taxon>Bacteria</taxon>
        <taxon>Pseudomonadati</taxon>
        <taxon>Campylobacterota</taxon>
        <taxon>Epsilonproteobacteria</taxon>
        <taxon>Nautiliales</taxon>
        <taxon>Nitratiruptoraceae</taxon>
        <taxon>Nitratiruptor</taxon>
    </lineage>
</organism>
<gene>
    <name evidence="1" type="primary">lpxC</name>
    <name type="ordered locus">NIS_0418</name>
</gene>
<name>LPXC_NITSB</name>
<comment type="function">
    <text evidence="1">Catalyzes the hydrolysis of UDP-3-O-myristoyl-N-acetylglucosamine to form UDP-3-O-myristoylglucosamine and acetate, the committed step in lipid A biosynthesis.</text>
</comment>
<comment type="catalytic activity">
    <reaction evidence="1">
        <text>a UDP-3-O-[(3R)-3-hydroxyacyl]-N-acetyl-alpha-D-glucosamine + H2O = a UDP-3-O-[(3R)-3-hydroxyacyl]-alpha-D-glucosamine + acetate</text>
        <dbReference type="Rhea" id="RHEA:67816"/>
        <dbReference type="ChEBI" id="CHEBI:15377"/>
        <dbReference type="ChEBI" id="CHEBI:30089"/>
        <dbReference type="ChEBI" id="CHEBI:137740"/>
        <dbReference type="ChEBI" id="CHEBI:173225"/>
        <dbReference type="EC" id="3.5.1.108"/>
    </reaction>
</comment>
<comment type="cofactor">
    <cofactor evidence="1">
        <name>Zn(2+)</name>
        <dbReference type="ChEBI" id="CHEBI:29105"/>
    </cofactor>
</comment>
<comment type="pathway">
    <text evidence="1">Glycolipid biosynthesis; lipid IV(A) biosynthesis; lipid IV(A) from (3R)-3-hydroxytetradecanoyl-[acyl-carrier-protein] and UDP-N-acetyl-alpha-D-glucosamine: step 2/6.</text>
</comment>
<comment type="similarity">
    <text evidence="1">Belongs to the LpxC family.</text>
</comment>
<proteinExistence type="inferred from homology"/>
<feature type="chain" id="PRO_1000013215" description="UDP-3-O-acyl-N-acetylglucosamine deacetylase">
    <location>
        <begin position="1"/>
        <end position="298"/>
    </location>
</feature>
<feature type="active site" description="Proton donor" evidence="1">
    <location>
        <position position="259"/>
    </location>
</feature>
<feature type="binding site" evidence="1">
    <location>
        <position position="75"/>
    </location>
    <ligand>
        <name>Zn(2+)</name>
        <dbReference type="ChEBI" id="CHEBI:29105"/>
    </ligand>
</feature>
<feature type="binding site" evidence="1">
    <location>
        <position position="232"/>
    </location>
    <ligand>
        <name>Zn(2+)</name>
        <dbReference type="ChEBI" id="CHEBI:29105"/>
    </ligand>
</feature>
<feature type="binding site" evidence="1">
    <location>
        <position position="236"/>
    </location>
    <ligand>
        <name>Zn(2+)</name>
        <dbReference type="ChEBI" id="CHEBI:29105"/>
    </ligand>
</feature>
<dbReference type="EC" id="3.5.1.108" evidence="1"/>
<dbReference type="EMBL" id="AP009178">
    <property type="protein sequence ID" value="BAF69532.1"/>
    <property type="molecule type" value="Genomic_DNA"/>
</dbReference>
<dbReference type="RefSeq" id="WP_012081795.1">
    <property type="nucleotide sequence ID" value="NC_009662.1"/>
</dbReference>
<dbReference type="SMR" id="A6Q223"/>
<dbReference type="FunCoup" id="A6Q223">
    <property type="interactions" value="360"/>
</dbReference>
<dbReference type="STRING" id="387092.NIS_0418"/>
<dbReference type="KEGG" id="nis:NIS_0418"/>
<dbReference type="eggNOG" id="COG0774">
    <property type="taxonomic scope" value="Bacteria"/>
</dbReference>
<dbReference type="HOGENOM" id="CLU_046528_1_0_7"/>
<dbReference type="InParanoid" id="A6Q223"/>
<dbReference type="OrthoDB" id="9802746at2"/>
<dbReference type="UniPathway" id="UPA00359">
    <property type="reaction ID" value="UER00478"/>
</dbReference>
<dbReference type="Proteomes" id="UP000001118">
    <property type="component" value="Chromosome"/>
</dbReference>
<dbReference type="GO" id="GO:0016020">
    <property type="term" value="C:membrane"/>
    <property type="evidence" value="ECO:0007669"/>
    <property type="project" value="GOC"/>
</dbReference>
<dbReference type="GO" id="GO:0046872">
    <property type="term" value="F:metal ion binding"/>
    <property type="evidence" value="ECO:0007669"/>
    <property type="project" value="UniProtKB-KW"/>
</dbReference>
<dbReference type="GO" id="GO:0103117">
    <property type="term" value="F:UDP-3-O-acyl-N-acetylglucosamine deacetylase activity"/>
    <property type="evidence" value="ECO:0007669"/>
    <property type="project" value="UniProtKB-UniRule"/>
</dbReference>
<dbReference type="GO" id="GO:0009245">
    <property type="term" value="P:lipid A biosynthetic process"/>
    <property type="evidence" value="ECO:0007669"/>
    <property type="project" value="UniProtKB-UniRule"/>
</dbReference>
<dbReference type="Gene3D" id="3.30.230.20">
    <property type="entry name" value="lpxc deacetylase, domain 1"/>
    <property type="match status" value="1"/>
</dbReference>
<dbReference type="Gene3D" id="3.30.1700.10">
    <property type="entry name" value="lpxc deacetylase, domain 2"/>
    <property type="match status" value="1"/>
</dbReference>
<dbReference type="HAMAP" id="MF_00388">
    <property type="entry name" value="LpxC"/>
    <property type="match status" value="1"/>
</dbReference>
<dbReference type="InterPro" id="IPR020568">
    <property type="entry name" value="Ribosomal_Su5_D2-typ_SF"/>
</dbReference>
<dbReference type="InterPro" id="IPR004463">
    <property type="entry name" value="UDP-acyl_GlcNac_deAcase"/>
</dbReference>
<dbReference type="InterPro" id="IPR011334">
    <property type="entry name" value="UDP-acyl_GlcNac_deAcase_C"/>
</dbReference>
<dbReference type="InterPro" id="IPR015870">
    <property type="entry name" value="UDP-acyl_N-AcGlcN_deAcase_N"/>
</dbReference>
<dbReference type="NCBIfam" id="TIGR00325">
    <property type="entry name" value="lpxC"/>
    <property type="match status" value="1"/>
</dbReference>
<dbReference type="PANTHER" id="PTHR33694">
    <property type="entry name" value="UDP-3-O-ACYL-N-ACETYLGLUCOSAMINE DEACETYLASE 1, MITOCHONDRIAL-RELATED"/>
    <property type="match status" value="1"/>
</dbReference>
<dbReference type="PANTHER" id="PTHR33694:SF1">
    <property type="entry name" value="UDP-3-O-ACYL-N-ACETYLGLUCOSAMINE DEACETYLASE 1, MITOCHONDRIAL-RELATED"/>
    <property type="match status" value="1"/>
</dbReference>
<dbReference type="Pfam" id="PF03331">
    <property type="entry name" value="LpxC"/>
    <property type="match status" value="1"/>
</dbReference>
<dbReference type="SUPFAM" id="SSF54211">
    <property type="entry name" value="Ribosomal protein S5 domain 2-like"/>
    <property type="match status" value="2"/>
</dbReference>